<feature type="chain" id="PRO_0000422681" description="Anti-sigma-D factor RsdA">
    <location>
        <begin position="1"/>
        <end position="299"/>
    </location>
</feature>
<feature type="topological domain" description="Cytoplasmic" evidence="2">
    <location>
        <begin position="1"/>
        <end position="85"/>
    </location>
</feature>
<feature type="transmembrane region" description="Helical" evidence="2">
    <location>
        <begin position="86"/>
        <end position="106"/>
    </location>
</feature>
<feature type="topological domain" description="Extracellular" evidence="2">
    <location>
        <begin position="107"/>
        <end position="299"/>
    </location>
</feature>
<feature type="region of interest" description="Disordered" evidence="3">
    <location>
        <begin position="187"/>
        <end position="299"/>
    </location>
</feature>
<feature type="compositionally biased region" description="Low complexity" evidence="3">
    <location>
        <begin position="201"/>
        <end position="212"/>
    </location>
</feature>
<feature type="compositionally biased region" description="Low complexity" evidence="3">
    <location>
        <begin position="250"/>
        <end position="271"/>
    </location>
</feature>
<gene>
    <name type="primary">rsdA</name>
    <name type="ordered locus">ERDMAN_3734</name>
</gene>
<name>RSDA_MYCTE</name>
<accession>H8EZ77</accession>
<proteinExistence type="inferred from homology"/>
<sequence length="299" mass="31248">MREFGNPLGDRPPLDELARTDLLLDALAEREEVDFADPRDDALAALLGQWRDDLRWPPASALVSQDEAVAALRAGVAQRRRARRSLAAVGSVAAALLVLSGFGAVVADARPGDLLYGLHAMMFNRSRVSDDQIVLSAKANLAKVEQMIAQGQWAEAQDELAEVSSTVQAVTDGSRRQDLINEVNLLNTKVETRDPNATLRPGSPSNPAAPGSVGNSWTPLAPVVEPPTPPTPASAAEPSMSAGVSESPMPNSTSTVAASPSTPSSKPEPGSIDPSLEPADEATNPAGQPAPETPVSPTH</sequence>
<reference key="1">
    <citation type="journal article" date="2012" name="J. Bacteriol.">
        <title>Complete annotated genome sequence of Mycobacterium tuberculosis Erdman.</title>
        <authorList>
            <person name="Miyoshi-Akiyama T."/>
            <person name="Matsumura K."/>
            <person name="Iwai H."/>
            <person name="Funatogawa K."/>
            <person name="Kirikae T."/>
        </authorList>
    </citation>
    <scope>NUCLEOTIDE SEQUENCE [LARGE SCALE GENOMIC DNA]</scope>
    <source>
        <strain>ATCC 35801 / TMC 107 / Erdman</strain>
    </source>
</reference>
<reference key="2">
    <citation type="journal article" date="2010" name="Mol. Microbiol.">
        <title>M. tuberculosis intramembrane protease Rip1 controls transcription through three anti-sigma factor substrates.</title>
        <authorList>
            <person name="Sklar J.G."/>
            <person name="Makinoshima H."/>
            <person name="Schneider J.S."/>
            <person name="Glickman M.S."/>
        </authorList>
    </citation>
    <scope>NOT A SUBSTRATE FOR RIP1</scope>
    <source>
        <strain>ATCC 35801 / TMC 107 / Erdman</strain>
    </source>
</reference>
<evidence type="ECO:0000250" key="1"/>
<evidence type="ECO:0000255" key="2"/>
<evidence type="ECO:0000256" key="3">
    <source>
        <dbReference type="SAM" id="MobiDB-lite"/>
    </source>
</evidence>
<evidence type="ECO:0000305" key="4"/>
<dbReference type="EMBL" id="AP012340">
    <property type="protein sequence ID" value="BAL67507.1"/>
    <property type="molecule type" value="Genomic_DNA"/>
</dbReference>
<dbReference type="RefSeq" id="WP_003418011.1">
    <property type="nucleotide sequence ID" value="NZ_KK339487.1"/>
</dbReference>
<dbReference type="SMR" id="H8EZ77"/>
<dbReference type="KEGG" id="mtn:ERDMAN_3734"/>
<dbReference type="PATRIC" id="fig|652616.3.peg.3804"/>
<dbReference type="HOGENOM" id="CLU_059914_0_0_11"/>
<dbReference type="GO" id="GO:0005886">
    <property type="term" value="C:plasma membrane"/>
    <property type="evidence" value="ECO:0007669"/>
    <property type="project" value="UniProtKB-SubCell"/>
</dbReference>
<dbReference type="Gene3D" id="6.10.250.1300">
    <property type="match status" value="1"/>
</dbReference>
<dbReference type="InterPro" id="IPR031928">
    <property type="entry name" value="RsdA_SigD-bd"/>
</dbReference>
<dbReference type="Pfam" id="PF16751">
    <property type="entry name" value="RsdA_SigD_bd"/>
    <property type="match status" value="1"/>
</dbReference>
<organism>
    <name type="scientific">Mycobacterium tuberculosis (strain ATCC 35801 / TMC 107 / Erdman)</name>
    <dbReference type="NCBI Taxonomy" id="652616"/>
    <lineage>
        <taxon>Bacteria</taxon>
        <taxon>Bacillati</taxon>
        <taxon>Actinomycetota</taxon>
        <taxon>Actinomycetes</taxon>
        <taxon>Mycobacteriales</taxon>
        <taxon>Mycobacteriaceae</taxon>
        <taxon>Mycobacterium</taxon>
        <taxon>Mycobacterium tuberculosis complex</taxon>
    </lineage>
</organism>
<protein>
    <recommendedName>
        <fullName>Anti-sigma-D factor RsdA</fullName>
    </recommendedName>
    <alternativeName>
        <fullName>Regulator of SigD</fullName>
    </alternativeName>
    <alternativeName>
        <fullName>Sigma-D anti-sigma factor RsdA</fullName>
    </alternativeName>
</protein>
<keyword id="KW-1003">Cell membrane</keyword>
<keyword id="KW-0472">Membrane</keyword>
<keyword id="KW-0804">Transcription</keyword>
<keyword id="KW-0805">Transcription regulation</keyword>
<keyword id="KW-0812">Transmembrane</keyword>
<keyword id="KW-1133">Transmembrane helix</keyword>
<comment type="function">
    <text evidence="1">An anti-sigma factor for extracytoplasmic function (ECF) sigma factor SigD. ECF sigma factors are held in an inactive form by an anti-sigma factor until released by regulated intramembrane proteolysis (RIP). RIP occurs when an extracytoplasmic signal triggers a concerted proteolytic cascade to transmit information and elicit cellular responses. The membrane-spanning regulatory substrate protein is first cut extracytoplasmically (site-1 protease, S1P), then within the membrane itself (site-2 protease, S2P), while cytoplasmic proteases finish degrading the regulatory protein, liberating the sigma factor (By similarity).</text>
</comment>
<comment type="subunit">
    <text evidence="1">Interacts with ECF RNA polymerase sigma factor SigD; this should inhibit the interaction of SigD with the RNA polymerase catalytic core.</text>
</comment>
<comment type="subcellular location">
    <subcellularLocation>
        <location evidence="4">Cell membrane</location>
        <topology evidence="4">Single-pass membrane protein</topology>
    </subcellularLocation>
</comment>
<comment type="domain">
    <text evidence="1">The cytosolic domain interacts with sigma factor SigD.</text>
</comment>